<accession>P48525</accession>
<accession>D6W232</accession>
<accession>Q08203</accession>
<sequence>MIMLRIPTRSYCSPSKLIKGVGLSPLKKSLLSKKIKEDIHPSLPVRTRFAPSPTGFLHLGSLRTALYNYLLARNTNGQFLLRLEDTDQKRLIEGAEENIYEILKWCNINYDETPIKQSERKLIYDKYVKILLSSGKAYRCFCSKERLNDLRHSAMELKPPSMASYDRCCAHLGEEEIKSKLAQGIPFTVRFKSPERYPTFTDLLHGQINLQPQVNFNDKRYDDLILVKSDKLPTYHLANVVDDHLMGITHVIRGEEWLPSTPKHIALYNAFGWACPKFIHIPLLTTVGDKKLSKRKGDMSISDLKRQGVLPEALINFCALFGWSPPRDLASKKHECFSMEELETIFNLNGLTKGNAKVDDKKLWFFNKHFLQKRILNPSTLRELVDDIMPSLESIYNTSTISREKVAKILLNCGGSLSRINDFHDEFYYFFEKPKYNDNDAVTKFLSKNESRHIAHLLKKLGQFQEGTDAQEVESMVETMYYENGFSRKVTYQAMRFALAGCHPGAKIAAMIDILGIKESNKRLSEGLQFLQREKK</sequence>
<proteinExistence type="evidence at protein level"/>
<protein>
    <recommendedName>
        <fullName>Glutamate--tRNA ligase, mitochondrial</fullName>
        <ecNumber>6.1.1.17</ecNumber>
    </recommendedName>
    <alternativeName>
        <fullName>Glutamyl-tRNA synthetase</fullName>
        <shortName>GluRS</shortName>
    </alternativeName>
</protein>
<evidence type="ECO:0000250" key="1"/>
<evidence type="ECO:0000269" key="2">
    <source>
    </source>
</evidence>
<evidence type="ECO:0000305" key="3"/>
<reference key="1">
    <citation type="submission" date="1995-01" db="EMBL/GenBank/DDBJ databases">
        <authorList>
            <person name="Tzagoloff A.A."/>
            <person name="Shtanko A."/>
        </authorList>
    </citation>
    <scope>NUCLEOTIDE SEQUENCE [GENOMIC DNA]</scope>
    <source>
        <strain>ATCC 24657 / D273-10B</strain>
    </source>
</reference>
<reference key="2">
    <citation type="journal article" date="1997" name="Nature">
        <title>The nucleotide sequence of Saccharomyces cerevisiae chromosome XV.</title>
        <authorList>
            <person name="Dujon B."/>
            <person name="Albermann K."/>
            <person name="Aldea M."/>
            <person name="Alexandraki D."/>
            <person name="Ansorge W."/>
            <person name="Arino J."/>
            <person name="Benes V."/>
            <person name="Bohn C."/>
            <person name="Bolotin-Fukuhara M."/>
            <person name="Bordonne R."/>
            <person name="Boyer J."/>
            <person name="Camasses A."/>
            <person name="Casamayor A."/>
            <person name="Casas C."/>
            <person name="Cheret G."/>
            <person name="Cziepluch C."/>
            <person name="Daignan-Fornier B."/>
            <person name="Dang V.-D."/>
            <person name="de Haan M."/>
            <person name="Delius H."/>
            <person name="Durand P."/>
            <person name="Fairhead C."/>
            <person name="Feldmann H."/>
            <person name="Gaillon L."/>
            <person name="Galisson F."/>
            <person name="Gamo F.-J."/>
            <person name="Gancedo C."/>
            <person name="Goffeau A."/>
            <person name="Goulding S.E."/>
            <person name="Grivell L.A."/>
            <person name="Habbig B."/>
            <person name="Hand N.J."/>
            <person name="Hani J."/>
            <person name="Hattenhorst U."/>
            <person name="Hebling U."/>
            <person name="Hernando Y."/>
            <person name="Herrero E."/>
            <person name="Heumann K."/>
            <person name="Hiesel R."/>
            <person name="Hilger F."/>
            <person name="Hofmann B."/>
            <person name="Hollenberg C.P."/>
            <person name="Hughes B."/>
            <person name="Jauniaux J.-C."/>
            <person name="Kalogeropoulos A."/>
            <person name="Katsoulou C."/>
            <person name="Kordes E."/>
            <person name="Lafuente M.J."/>
            <person name="Landt O."/>
            <person name="Louis E.J."/>
            <person name="Maarse A.C."/>
            <person name="Madania A."/>
            <person name="Mannhaupt G."/>
            <person name="Marck C."/>
            <person name="Martin R.P."/>
            <person name="Mewes H.-W."/>
            <person name="Michaux G."/>
            <person name="Paces V."/>
            <person name="Parle-McDermott A.G."/>
            <person name="Pearson B.M."/>
            <person name="Perrin A."/>
            <person name="Pettersson B."/>
            <person name="Poch O."/>
            <person name="Pohl T.M."/>
            <person name="Poirey R."/>
            <person name="Portetelle D."/>
            <person name="Pujol A."/>
            <person name="Purnelle B."/>
            <person name="Ramezani Rad M."/>
            <person name="Rechmann S."/>
            <person name="Schwager C."/>
            <person name="Schweizer M."/>
            <person name="Sor F."/>
            <person name="Sterky F."/>
            <person name="Tarassov I.A."/>
            <person name="Teodoru C."/>
            <person name="Tettelin H."/>
            <person name="Thierry A."/>
            <person name="Tobiasch E."/>
            <person name="Tzermia M."/>
            <person name="Uhlen M."/>
            <person name="Unseld M."/>
            <person name="Valens M."/>
            <person name="Vandenbol M."/>
            <person name="Vetter I."/>
            <person name="Vlcek C."/>
            <person name="Voet M."/>
            <person name="Volckaert G."/>
            <person name="Voss H."/>
            <person name="Wambutt R."/>
            <person name="Wedler H."/>
            <person name="Wiemann S."/>
            <person name="Winsor B."/>
            <person name="Wolfe K.H."/>
            <person name="Zollner A."/>
            <person name="Zumstein E."/>
            <person name="Kleine K."/>
        </authorList>
    </citation>
    <scope>NUCLEOTIDE SEQUENCE [LARGE SCALE GENOMIC DNA]</scope>
    <source>
        <strain>ATCC 204508 / S288c</strain>
    </source>
</reference>
<reference key="3">
    <citation type="journal article" date="2014" name="G3 (Bethesda)">
        <title>The reference genome sequence of Saccharomyces cerevisiae: Then and now.</title>
        <authorList>
            <person name="Engel S.R."/>
            <person name="Dietrich F.S."/>
            <person name="Fisk D.G."/>
            <person name="Binkley G."/>
            <person name="Balakrishnan R."/>
            <person name="Costanzo M.C."/>
            <person name="Dwight S.S."/>
            <person name="Hitz B.C."/>
            <person name="Karra K."/>
            <person name="Nash R.S."/>
            <person name="Weng S."/>
            <person name="Wong E.D."/>
            <person name="Lloyd P."/>
            <person name="Skrzypek M.S."/>
            <person name="Miyasato S.R."/>
            <person name="Simison M."/>
            <person name="Cherry J.M."/>
        </authorList>
    </citation>
    <scope>GENOME REANNOTATION</scope>
    <source>
        <strain>ATCC 204508 / S288c</strain>
    </source>
</reference>
<reference key="4">
    <citation type="journal article" date="2003" name="Nature">
        <title>Global analysis of protein expression in yeast.</title>
        <authorList>
            <person name="Ghaemmaghami S."/>
            <person name="Huh W.-K."/>
            <person name="Bower K."/>
            <person name="Howson R.W."/>
            <person name="Belle A."/>
            <person name="Dephoure N."/>
            <person name="O'Shea E.K."/>
            <person name="Weissman J.S."/>
        </authorList>
    </citation>
    <scope>LEVEL OF PROTEIN EXPRESSION [LARGE SCALE ANALYSIS]</scope>
</reference>
<dbReference type="EC" id="6.1.1.17"/>
<dbReference type="EMBL" id="L39015">
    <property type="protein sequence ID" value="AAA61403.1"/>
    <property type="molecule type" value="Genomic_DNA"/>
</dbReference>
<dbReference type="EMBL" id="Z74775">
    <property type="protein sequence ID" value="CAA99033.1"/>
    <property type="molecule type" value="Genomic_DNA"/>
</dbReference>
<dbReference type="EMBL" id="BK006948">
    <property type="protein sequence ID" value="DAA10748.1"/>
    <property type="molecule type" value="Genomic_DNA"/>
</dbReference>
<dbReference type="PIR" id="S66716">
    <property type="entry name" value="S66716"/>
</dbReference>
<dbReference type="RefSeq" id="NP_014609.1">
    <property type="nucleotide sequence ID" value="NM_001183287.1"/>
</dbReference>
<dbReference type="SMR" id="P48525"/>
<dbReference type="BioGRID" id="34367">
    <property type="interactions" value="22"/>
</dbReference>
<dbReference type="DIP" id="DIP-6368N"/>
<dbReference type="FunCoup" id="P48525">
    <property type="interactions" value="859"/>
</dbReference>
<dbReference type="IntAct" id="P48525">
    <property type="interactions" value="5"/>
</dbReference>
<dbReference type="MINT" id="P48525"/>
<dbReference type="STRING" id="4932.YOL033W"/>
<dbReference type="CarbonylDB" id="P48525"/>
<dbReference type="iPTMnet" id="P48525"/>
<dbReference type="SwissPalm" id="P48525"/>
<dbReference type="PaxDb" id="4932-YOL033W"/>
<dbReference type="PeptideAtlas" id="P48525"/>
<dbReference type="TopDownProteomics" id="P48525"/>
<dbReference type="EnsemblFungi" id="YOL033W_mRNA">
    <property type="protein sequence ID" value="YOL033W"/>
    <property type="gene ID" value="YOL033W"/>
</dbReference>
<dbReference type="GeneID" id="854124"/>
<dbReference type="KEGG" id="sce:YOL033W"/>
<dbReference type="AGR" id="SGD:S000005393"/>
<dbReference type="SGD" id="S000005393">
    <property type="gene designation" value="MSE1"/>
</dbReference>
<dbReference type="VEuPathDB" id="FungiDB:YOL033W"/>
<dbReference type="eggNOG" id="KOG1149">
    <property type="taxonomic scope" value="Eukaryota"/>
</dbReference>
<dbReference type="GeneTree" id="ENSGT00390000009759"/>
<dbReference type="HOGENOM" id="CLU_015768_6_3_1"/>
<dbReference type="InParanoid" id="P48525"/>
<dbReference type="OMA" id="HGATNVM"/>
<dbReference type="OrthoDB" id="428822at2759"/>
<dbReference type="BioCyc" id="YEAST:G3O-33449-MONOMER"/>
<dbReference type="SABIO-RK" id="P48525"/>
<dbReference type="BioGRID-ORCS" id="854124">
    <property type="hits" value="0 hits in 10 CRISPR screens"/>
</dbReference>
<dbReference type="PRO" id="PR:P48525"/>
<dbReference type="Proteomes" id="UP000002311">
    <property type="component" value="Chromosome XV"/>
</dbReference>
<dbReference type="RNAct" id="P48525">
    <property type="molecule type" value="protein"/>
</dbReference>
<dbReference type="GO" id="GO:0005759">
    <property type="term" value="C:mitochondrial matrix"/>
    <property type="evidence" value="ECO:0007669"/>
    <property type="project" value="UniProtKB-SubCell"/>
</dbReference>
<dbReference type="GO" id="GO:0005739">
    <property type="term" value="C:mitochondrion"/>
    <property type="evidence" value="ECO:0000315"/>
    <property type="project" value="SGD"/>
</dbReference>
<dbReference type="GO" id="GO:0005524">
    <property type="term" value="F:ATP binding"/>
    <property type="evidence" value="ECO:0007669"/>
    <property type="project" value="UniProtKB-KW"/>
</dbReference>
<dbReference type="GO" id="GO:0004818">
    <property type="term" value="F:glutamate-tRNA ligase activity"/>
    <property type="evidence" value="ECO:0000247"/>
    <property type="project" value="SGD"/>
</dbReference>
<dbReference type="GO" id="GO:0000049">
    <property type="term" value="F:tRNA binding"/>
    <property type="evidence" value="ECO:0007669"/>
    <property type="project" value="InterPro"/>
</dbReference>
<dbReference type="GO" id="GO:0008270">
    <property type="term" value="F:zinc ion binding"/>
    <property type="evidence" value="ECO:0007669"/>
    <property type="project" value="InterPro"/>
</dbReference>
<dbReference type="GO" id="GO:0006424">
    <property type="term" value="P:glutamyl-tRNA aminoacylation"/>
    <property type="evidence" value="ECO:0000247"/>
    <property type="project" value="SGD"/>
</dbReference>
<dbReference type="GO" id="GO:0070149">
    <property type="term" value="P:mitochondrial glutamyl-tRNA aminoacylation"/>
    <property type="evidence" value="ECO:0000305"/>
    <property type="project" value="SGD"/>
</dbReference>
<dbReference type="GO" id="GO:0032543">
    <property type="term" value="P:mitochondrial translation"/>
    <property type="evidence" value="ECO:0000315"/>
    <property type="project" value="SGD"/>
</dbReference>
<dbReference type="CDD" id="cd00808">
    <property type="entry name" value="GluRS_core"/>
    <property type="match status" value="1"/>
</dbReference>
<dbReference type="FunFam" id="3.40.50.620:FF:000045">
    <property type="entry name" value="Glutamate--tRNA ligase, mitochondrial"/>
    <property type="match status" value="1"/>
</dbReference>
<dbReference type="Gene3D" id="1.10.10.350">
    <property type="match status" value="1"/>
</dbReference>
<dbReference type="Gene3D" id="3.40.50.620">
    <property type="entry name" value="HUPs"/>
    <property type="match status" value="1"/>
</dbReference>
<dbReference type="HAMAP" id="MF_00022">
    <property type="entry name" value="Glu_tRNA_synth_type1"/>
    <property type="match status" value="1"/>
</dbReference>
<dbReference type="InterPro" id="IPR045462">
    <property type="entry name" value="aa-tRNA-synth_I_cd-bd"/>
</dbReference>
<dbReference type="InterPro" id="IPR020751">
    <property type="entry name" value="aa-tRNA-synth_I_codon-bd_sub2"/>
</dbReference>
<dbReference type="InterPro" id="IPR008925">
    <property type="entry name" value="aa_tRNA-synth_I_cd-bd_sf"/>
</dbReference>
<dbReference type="InterPro" id="IPR004527">
    <property type="entry name" value="Glu-tRNA-ligase_bac/mito"/>
</dbReference>
<dbReference type="InterPro" id="IPR000924">
    <property type="entry name" value="Glu/Gln-tRNA-synth"/>
</dbReference>
<dbReference type="InterPro" id="IPR020058">
    <property type="entry name" value="Glu/Gln-tRNA-synth_Ib_cat-dom"/>
</dbReference>
<dbReference type="InterPro" id="IPR049940">
    <property type="entry name" value="GluQ/Sye"/>
</dbReference>
<dbReference type="InterPro" id="IPR033910">
    <property type="entry name" value="GluRS_core"/>
</dbReference>
<dbReference type="InterPro" id="IPR014729">
    <property type="entry name" value="Rossmann-like_a/b/a_fold"/>
</dbReference>
<dbReference type="NCBIfam" id="TIGR00464">
    <property type="entry name" value="gltX_bact"/>
    <property type="match status" value="1"/>
</dbReference>
<dbReference type="PANTHER" id="PTHR43311">
    <property type="entry name" value="GLUTAMATE--TRNA LIGASE"/>
    <property type="match status" value="1"/>
</dbReference>
<dbReference type="PANTHER" id="PTHR43311:SF2">
    <property type="entry name" value="GLUTAMATE--TRNA LIGASE, MITOCHONDRIAL-RELATED"/>
    <property type="match status" value="1"/>
</dbReference>
<dbReference type="Pfam" id="PF19269">
    <property type="entry name" value="Anticodon_2"/>
    <property type="match status" value="1"/>
</dbReference>
<dbReference type="Pfam" id="PF00749">
    <property type="entry name" value="tRNA-synt_1c"/>
    <property type="match status" value="1"/>
</dbReference>
<dbReference type="PRINTS" id="PR00987">
    <property type="entry name" value="TRNASYNTHGLU"/>
</dbReference>
<dbReference type="SUPFAM" id="SSF48163">
    <property type="entry name" value="An anticodon-binding domain of class I aminoacyl-tRNA synthetases"/>
    <property type="match status" value="1"/>
</dbReference>
<dbReference type="SUPFAM" id="SSF52374">
    <property type="entry name" value="Nucleotidylyl transferase"/>
    <property type="match status" value="1"/>
</dbReference>
<keyword id="KW-0030">Aminoacyl-tRNA synthetase</keyword>
<keyword id="KW-0067">ATP-binding</keyword>
<keyword id="KW-0436">Ligase</keyword>
<keyword id="KW-0496">Mitochondrion</keyword>
<keyword id="KW-0547">Nucleotide-binding</keyword>
<keyword id="KW-0648">Protein biosynthesis</keyword>
<keyword id="KW-1185">Reference proteome</keyword>
<keyword id="KW-0694">RNA-binding</keyword>
<feature type="chain" id="PRO_0000119740" description="Glutamate--tRNA ligase, mitochondrial">
    <location>
        <begin position="1"/>
        <end position="536"/>
    </location>
</feature>
<feature type="short sequence motif" description="'HIGH' region">
    <location>
        <begin position="53"/>
        <end position="61"/>
    </location>
</feature>
<feature type="short sequence motif" description="'KMSKS' region">
    <location>
        <begin position="291"/>
        <end position="295"/>
    </location>
</feature>
<feature type="binding site" evidence="1">
    <location>
        <begin position="48"/>
        <end position="50"/>
    </location>
    <ligand>
        <name>L-glutamate</name>
        <dbReference type="ChEBI" id="CHEBI:29985"/>
    </ligand>
</feature>
<feature type="binding site" evidence="1">
    <location>
        <position position="58"/>
    </location>
    <ligand>
        <name>ATP</name>
        <dbReference type="ChEBI" id="CHEBI:30616"/>
    </ligand>
</feature>
<feature type="binding site" evidence="1">
    <location>
        <position position="84"/>
    </location>
    <ligand>
        <name>L-glutamate</name>
        <dbReference type="ChEBI" id="CHEBI:29985"/>
    </ligand>
</feature>
<feature type="binding site" evidence="1">
    <location>
        <begin position="235"/>
        <end position="239"/>
    </location>
    <ligand>
        <name>L-glutamate</name>
        <dbReference type="ChEBI" id="CHEBI:29985"/>
    </ligand>
</feature>
<feature type="binding site" evidence="1">
    <location>
        <position position="253"/>
    </location>
    <ligand>
        <name>L-glutamate</name>
        <dbReference type="ChEBI" id="CHEBI:29985"/>
    </ligand>
</feature>
<feature type="binding site" evidence="1">
    <location>
        <position position="256"/>
    </location>
    <ligand>
        <name>ATP</name>
        <dbReference type="ChEBI" id="CHEBI:30616"/>
    </ligand>
</feature>
<feature type="binding site" evidence="1">
    <location>
        <begin position="291"/>
        <end position="295"/>
    </location>
    <ligand>
        <name>ATP</name>
        <dbReference type="ChEBI" id="CHEBI:30616"/>
    </ligand>
</feature>
<feature type="sequence conflict" description="In Ref. 1; AAA61403." evidence="3" ref="1">
    <original>F</original>
    <variation>L</variation>
    <location>
        <position position="464"/>
    </location>
</feature>
<name>SYEM_YEAST</name>
<comment type="function">
    <text evidence="1">Catalyzes the attachment of glutamate to tRNA(Glu) in a two-step reaction: glutamate is first activated by ATP to form Glu-AMP and then transferred to the acceptor end of tRNA(Glu).</text>
</comment>
<comment type="catalytic activity">
    <reaction>
        <text>tRNA(Glu) + L-glutamate + ATP = L-glutamyl-tRNA(Glu) + AMP + diphosphate</text>
        <dbReference type="Rhea" id="RHEA:23540"/>
        <dbReference type="Rhea" id="RHEA-COMP:9663"/>
        <dbReference type="Rhea" id="RHEA-COMP:9680"/>
        <dbReference type="ChEBI" id="CHEBI:29985"/>
        <dbReference type="ChEBI" id="CHEBI:30616"/>
        <dbReference type="ChEBI" id="CHEBI:33019"/>
        <dbReference type="ChEBI" id="CHEBI:78442"/>
        <dbReference type="ChEBI" id="CHEBI:78520"/>
        <dbReference type="ChEBI" id="CHEBI:456215"/>
        <dbReference type="EC" id="6.1.1.17"/>
    </reaction>
</comment>
<comment type="subcellular location">
    <subcellularLocation>
        <location>Mitochondrion matrix</location>
    </subcellularLocation>
</comment>
<comment type="miscellaneous">
    <text evidence="2">Present with 2940 molecules/cell in log phase SD medium.</text>
</comment>
<comment type="similarity">
    <text evidence="3">Belongs to the class-I aminoacyl-tRNA synthetase family. Glutamate--tRNA ligase type 1 subfamily.</text>
</comment>
<gene>
    <name type="primary">MSE1</name>
    <name type="ordered locus">YOL033W</name>
</gene>
<organism>
    <name type="scientific">Saccharomyces cerevisiae (strain ATCC 204508 / S288c)</name>
    <name type="common">Baker's yeast</name>
    <dbReference type="NCBI Taxonomy" id="559292"/>
    <lineage>
        <taxon>Eukaryota</taxon>
        <taxon>Fungi</taxon>
        <taxon>Dikarya</taxon>
        <taxon>Ascomycota</taxon>
        <taxon>Saccharomycotina</taxon>
        <taxon>Saccharomycetes</taxon>
        <taxon>Saccharomycetales</taxon>
        <taxon>Saccharomycetaceae</taxon>
        <taxon>Saccharomyces</taxon>
    </lineage>
</organism>